<reference key="1">
    <citation type="journal article" date="2002" name="Proc. Natl. Acad. Sci. U.S.A.">
        <title>Genome sequence of the hyperthermophilic crenarchaeon Pyrobaculum aerophilum.</title>
        <authorList>
            <person name="Fitz-Gibbon S.T."/>
            <person name="Ladner H."/>
            <person name="Kim U.-J."/>
            <person name="Stetter K.O."/>
            <person name="Simon M.I."/>
            <person name="Miller J.H."/>
        </authorList>
    </citation>
    <scope>NUCLEOTIDE SEQUENCE [LARGE SCALE GENOMIC DNA]</scope>
    <source>
        <strain>ATCC 51768 / DSM 7523 / JCM 9630 / CIP 104966 / NBRC 100827 / IM2</strain>
    </source>
</reference>
<sequence length="75" mass="9011">MSSEKKLKAKVLREMKPEERRELLNQLRAELVRLETQRARGFVEKPGRIRQVRRIIARILTIEREEELKKAKSRS</sequence>
<evidence type="ECO:0000255" key="1">
    <source>
        <dbReference type="HAMAP-Rule" id="MF_00374"/>
    </source>
</evidence>
<evidence type="ECO:0000305" key="2"/>
<comment type="similarity">
    <text evidence="1">Belongs to the universal ribosomal protein uL29 family.</text>
</comment>
<proteinExistence type="inferred from homology"/>
<protein>
    <recommendedName>
        <fullName evidence="1">Large ribosomal subunit protein uL29</fullName>
    </recommendedName>
    <alternativeName>
        <fullName evidence="2">50S ribosomal protein L29</fullName>
    </alternativeName>
</protein>
<dbReference type="EMBL" id="AE009441">
    <property type="protein sequence ID" value="AAL63721.1"/>
    <property type="molecule type" value="Genomic_DNA"/>
</dbReference>
<dbReference type="RefSeq" id="WP_011008192.1">
    <property type="nucleotide sequence ID" value="NC_003364.1"/>
</dbReference>
<dbReference type="SMR" id="Q8ZWI1"/>
<dbReference type="FunCoup" id="Q8ZWI1">
    <property type="interactions" value="168"/>
</dbReference>
<dbReference type="STRING" id="178306.PAE1778"/>
<dbReference type="EnsemblBacteria" id="AAL63721">
    <property type="protein sequence ID" value="AAL63721"/>
    <property type="gene ID" value="PAE1778"/>
</dbReference>
<dbReference type="GeneID" id="1465972"/>
<dbReference type="KEGG" id="pai:PAE1778"/>
<dbReference type="PATRIC" id="fig|178306.9.peg.1312"/>
<dbReference type="eggNOG" id="arCOG00785">
    <property type="taxonomic scope" value="Archaea"/>
</dbReference>
<dbReference type="HOGENOM" id="CLU_158491_2_1_2"/>
<dbReference type="InParanoid" id="Q8ZWI1"/>
<dbReference type="Proteomes" id="UP000002439">
    <property type="component" value="Chromosome"/>
</dbReference>
<dbReference type="GO" id="GO:0022625">
    <property type="term" value="C:cytosolic large ribosomal subunit"/>
    <property type="evidence" value="ECO:0000318"/>
    <property type="project" value="GO_Central"/>
</dbReference>
<dbReference type="GO" id="GO:0003735">
    <property type="term" value="F:structural constituent of ribosome"/>
    <property type="evidence" value="ECO:0007669"/>
    <property type="project" value="InterPro"/>
</dbReference>
<dbReference type="GO" id="GO:0006412">
    <property type="term" value="P:translation"/>
    <property type="evidence" value="ECO:0007669"/>
    <property type="project" value="UniProtKB-UniRule"/>
</dbReference>
<dbReference type="CDD" id="cd00427">
    <property type="entry name" value="Ribosomal_L29_HIP"/>
    <property type="match status" value="1"/>
</dbReference>
<dbReference type="FunFam" id="1.10.287.310:FF:000001">
    <property type="entry name" value="50S ribosomal protein L29"/>
    <property type="match status" value="1"/>
</dbReference>
<dbReference type="Gene3D" id="1.10.287.310">
    <property type="match status" value="1"/>
</dbReference>
<dbReference type="HAMAP" id="MF_00374">
    <property type="entry name" value="Ribosomal_uL29"/>
    <property type="match status" value="1"/>
</dbReference>
<dbReference type="InterPro" id="IPR050063">
    <property type="entry name" value="Ribosomal_protein_uL29"/>
</dbReference>
<dbReference type="InterPro" id="IPR001854">
    <property type="entry name" value="Ribosomal_uL29"/>
</dbReference>
<dbReference type="InterPro" id="IPR036049">
    <property type="entry name" value="Ribosomal_uL29_sf"/>
</dbReference>
<dbReference type="NCBIfam" id="TIGR00012">
    <property type="entry name" value="L29"/>
    <property type="match status" value="1"/>
</dbReference>
<dbReference type="PANTHER" id="PTHR10916">
    <property type="entry name" value="60S RIBOSOMAL PROTEIN L35/50S RIBOSOMAL PROTEIN L29"/>
    <property type="match status" value="1"/>
</dbReference>
<dbReference type="PANTHER" id="PTHR10916:SF0">
    <property type="entry name" value="LARGE RIBOSOMAL SUBUNIT PROTEIN UL29C"/>
    <property type="match status" value="1"/>
</dbReference>
<dbReference type="Pfam" id="PF00831">
    <property type="entry name" value="Ribosomal_L29"/>
    <property type="match status" value="1"/>
</dbReference>
<dbReference type="SUPFAM" id="SSF46561">
    <property type="entry name" value="Ribosomal protein L29 (L29p)"/>
    <property type="match status" value="1"/>
</dbReference>
<feature type="chain" id="PRO_0000130519" description="Large ribosomal subunit protein uL29">
    <location>
        <begin position="1"/>
        <end position="75"/>
    </location>
</feature>
<accession>Q8ZWI1</accession>
<name>RL29_PYRAE</name>
<keyword id="KW-1185">Reference proteome</keyword>
<keyword id="KW-0687">Ribonucleoprotein</keyword>
<keyword id="KW-0689">Ribosomal protein</keyword>
<gene>
    <name evidence="1" type="primary">rpl29</name>
    <name type="ordered locus">PAE1778</name>
</gene>
<organism>
    <name type="scientific">Pyrobaculum aerophilum (strain ATCC 51768 / DSM 7523 / JCM 9630 / CIP 104966 / NBRC 100827 / IM2)</name>
    <dbReference type="NCBI Taxonomy" id="178306"/>
    <lineage>
        <taxon>Archaea</taxon>
        <taxon>Thermoproteota</taxon>
        <taxon>Thermoprotei</taxon>
        <taxon>Thermoproteales</taxon>
        <taxon>Thermoproteaceae</taxon>
        <taxon>Pyrobaculum</taxon>
    </lineage>
</organism>